<dbReference type="EC" id="2.7.2.11" evidence="1"/>
<dbReference type="EMBL" id="CP000282">
    <property type="protein sequence ID" value="ABD80273.1"/>
    <property type="molecule type" value="Genomic_DNA"/>
</dbReference>
<dbReference type="RefSeq" id="WP_011467493.1">
    <property type="nucleotide sequence ID" value="NC_007912.1"/>
</dbReference>
<dbReference type="SMR" id="Q21M06"/>
<dbReference type="STRING" id="203122.Sde_1011"/>
<dbReference type="GeneID" id="98612695"/>
<dbReference type="KEGG" id="sde:Sde_1011"/>
<dbReference type="eggNOG" id="COG0263">
    <property type="taxonomic scope" value="Bacteria"/>
</dbReference>
<dbReference type="HOGENOM" id="CLU_025400_2_0_6"/>
<dbReference type="OrthoDB" id="9804434at2"/>
<dbReference type="UniPathway" id="UPA00098">
    <property type="reaction ID" value="UER00359"/>
</dbReference>
<dbReference type="Proteomes" id="UP000001947">
    <property type="component" value="Chromosome"/>
</dbReference>
<dbReference type="GO" id="GO:0005829">
    <property type="term" value="C:cytosol"/>
    <property type="evidence" value="ECO:0007669"/>
    <property type="project" value="TreeGrafter"/>
</dbReference>
<dbReference type="GO" id="GO:0005524">
    <property type="term" value="F:ATP binding"/>
    <property type="evidence" value="ECO:0007669"/>
    <property type="project" value="UniProtKB-KW"/>
</dbReference>
<dbReference type="GO" id="GO:0004349">
    <property type="term" value="F:glutamate 5-kinase activity"/>
    <property type="evidence" value="ECO:0007669"/>
    <property type="project" value="UniProtKB-UniRule"/>
</dbReference>
<dbReference type="GO" id="GO:0003723">
    <property type="term" value="F:RNA binding"/>
    <property type="evidence" value="ECO:0007669"/>
    <property type="project" value="InterPro"/>
</dbReference>
<dbReference type="GO" id="GO:0055129">
    <property type="term" value="P:L-proline biosynthetic process"/>
    <property type="evidence" value="ECO:0007669"/>
    <property type="project" value="UniProtKB-UniRule"/>
</dbReference>
<dbReference type="CDD" id="cd04242">
    <property type="entry name" value="AAK_G5K_ProB"/>
    <property type="match status" value="1"/>
</dbReference>
<dbReference type="CDD" id="cd21157">
    <property type="entry name" value="PUA_G5K"/>
    <property type="match status" value="1"/>
</dbReference>
<dbReference type="FunFam" id="2.30.130.10:FF:000007">
    <property type="entry name" value="Glutamate 5-kinase"/>
    <property type="match status" value="1"/>
</dbReference>
<dbReference type="FunFam" id="3.40.1160.10:FF:000018">
    <property type="entry name" value="Glutamate 5-kinase"/>
    <property type="match status" value="1"/>
</dbReference>
<dbReference type="Gene3D" id="3.40.1160.10">
    <property type="entry name" value="Acetylglutamate kinase-like"/>
    <property type="match status" value="2"/>
</dbReference>
<dbReference type="Gene3D" id="2.30.130.10">
    <property type="entry name" value="PUA domain"/>
    <property type="match status" value="1"/>
</dbReference>
<dbReference type="HAMAP" id="MF_00456">
    <property type="entry name" value="ProB"/>
    <property type="match status" value="1"/>
</dbReference>
<dbReference type="InterPro" id="IPR036393">
    <property type="entry name" value="AceGlu_kinase-like_sf"/>
</dbReference>
<dbReference type="InterPro" id="IPR001048">
    <property type="entry name" value="Asp/Glu/Uridylate_kinase"/>
</dbReference>
<dbReference type="InterPro" id="IPR041739">
    <property type="entry name" value="G5K_ProB"/>
</dbReference>
<dbReference type="InterPro" id="IPR001057">
    <property type="entry name" value="Glu/AcGlu_kinase"/>
</dbReference>
<dbReference type="InterPro" id="IPR011529">
    <property type="entry name" value="Glu_5kinase"/>
</dbReference>
<dbReference type="InterPro" id="IPR005715">
    <property type="entry name" value="Glu_5kinase/COase_Synthase"/>
</dbReference>
<dbReference type="InterPro" id="IPR019797">
    <property type="entry name" value="Glutamate_5-kinase_CS"/>
</dbReference>
<dbReference type="InterPro" id="IPR002478">
    <property type="entry name" value="PUA"/>
</dbReference>
<dbReference type="InterPro" id="IPR015947">
    <property type="entry name" value="PUA-like_sf"/>
</dbReference>
<dbReference type="InterPro" id="IPR036974">
    <property type="entry name" value="PUA_sf"/>
</dbReference>
<dbReference type="NCBIfam" id="TIGR01027">
    <property type="entry name" value="proB"/>
    <property type="match status" value="1"/>
</dbReference>
<dbReference type="PANTHER" id="PTHR43654">
    <property type="entry name" value="GLUTAMATE 5-KINASE"/>
    <property type="match status" value="1"/>
</dbReference>
<dbReference type="PANTHER" id="PTHR43654:SF1">
    <property type="entry name" value="ISOPENTENYL PHOSPHATE KINASE"/>
    <property type="match status" value="1"/>
</dbReference>
<dbReference type="Pfam" id="PF00696">
    <property type="entry name" value="AA_kinase"/>
    <property type="match status" value="1"/>
</dbReference>
<dbReference type="Pfam" id="PF01472">
    <property type="entry name" value="PUA"/>
    <property type="match status" value="1"/>
</dbReference>
<dbReference type="PIRSF" id="PIRSF000729">
    <property type="entry name" value="GK"/>
    <property type="match status" value="1"/>
</dbReference>
<dbReference type="PRINTS" id="PR00474">
    <property type="entry name" value="GLU5KINASE"/>
</dbReference>
<dbReference type="SMART" id="SM00359">
    <property type="entry name" value="PUA"/>
    <property type="match status" value="1"/>
</dbReference>
<dbReference type="SUPFAM" id="SSF53633">
    <property type="entry name" value="Carbamate kinase-like"/>
    <property type="match status" value="1"/>
</dbReference>
<dbReference type="SUPFAM" id="SSF88697">
    <property type="entry name" value="PUA domain-like"/>
    <property type="match status" value="1"/>
</dbReference>
<dbReference type="PROSITE" id="PS00902">
    <property type="entry name" value="GLUTAMATE_5_KINASE"/>
    <property type="match status" value="1"/>
</dbReference>
<dbReference type="PROSITE" id="PS50890">
    <property type="entry name" value="PUA"/>
    <property type="match status" value="1"/>
</dbReference>
<comment type="function">
    <text evidence="1">Catalyzes the transfer of a phosphate group to glutamate to form L-glutamate 5-phosphate.</text>
</comment>
<comment type="catalytic activity">
    <reaction evidence="1">
        <text>L-glutamate + ATP = L-glutamyl 5-phosphate + ADP</text>
        <dbReference type="Rhea" id="RHEA:14877"/>
        <dbReference type="ChEBI" id="CHEBI:29985"/>
        <dbReference type="ChEBI" id="CHEBI:30616"/>
        <dbReference type="ChEBI" id="CHEBI:58274"/>
        <dbReference type="ChEBI" id="CHEBI:456216"/>
        <dbReference type="EC" id="2.7.2.11"/>
    </reaction>
</comment>
<comment type="pathway">
    <text evidence="1">Amino-acid biosynthesis; L-proline biosynthesis; L-glutamate 5-semialdehyde from L-glutamate: step 1/2.</text>
</comment>
<comment type="subcellular location">
    <subcellularLocation>
        <location evidence="1">Cytoplasm</location>
    </subcellularLocation>
</comment>
<comment type="similarity">
    <text evidence="1">Belongs to the glutamate 5-kinase family.</text>
</comment>
<organism>
    <name type="scientific">Saccharophagus degradans (strain 2-40 / ATCC 43961 / DSM 17024)</name>
    <dbReference type="NCBI Taxonomy" id="203122"/>
    <lineage>
        <taxon>Bacteria</taxon>
        <taxon>Pseudomonadati</taxon>
        <taxon>Pseudomonadota</taxon>
        <taxon>Gammaproteobacteria</taxon>
        <taxon>Cellvibrionales</taxon>
        <taxon>Cellvibrionaceae</taxon>
        <taxon>Saccharophagus</taxon>
    </lineage>
</organism>
<feature type="chain" id="PRO_0000252999" description="Glutamate 5-kinase">
    <location>
        <begin position="1"/>
        <end position="373"/>
    </location>
</feature>
<feature type="domain" description="PUA" evidence="1">
    <location>
        <begin position="281"/>
        <end position="359"/>
    </location>
</feature>
<feature type="binding site" evidence="1">
    <location>
        <position position="16"/>
    </location>
    <ligand>
        <name>ATP</name>
        <dbReference type="ChEBI" id="CHEBI:30616"/>
    </ligand>
</feature>
<feature type="binding site" evidence="1">
    <location>
        <position position="56"/>
    </location>
    <ligand>
        <name>substrate</name>
    </ligand>
</feature>
<feature type="binding site" evidence="1">
    <location>
        <position position="143"/>
    </location>
    <ligand>
        <name>substrate</name>
    </ligand>
</feature>
<feature type="binding site" evidence="1">
    <location>
        <position position="155"/>
    </location>
    <ligand>
        <name>substrate</name>
    </ligand>
</feature>
<feature type="binding site" evidence="1">
    <location>
        <begin position="175"/>
        <end position="176"/>
    </location>
    <ligand>
        <name>ATP</name>
        <dbReference type="ChEBI" id="CHEBI:30616"/>
    </ligand>
</feature>
<protein>
    <recommendedName>
        <fullName evidence="1">Glutamate 5-kinase</fullName>
        <ecNumber evidence="1">2.7.2.11</ecNumber>
    </recommendedName>
    <alternativeName>
        <fullName evidence="1">Gamma-glutamyl kinase</fullName>
        <shortName evidence="1">GK</shortName>
    </alternativeName>
</protein>
<accession>Q21M06</accession>
<gene>
    <name evidence="1" type="primary">proB</name>
    <name type="ordered locus">Sde_1011</name>
</gene>
<proteinExistence type="inferred from homology"/>
<keyword id="KW-0028">Amino-acid biosynthesis</keyword>
<keyword id="KW-0067">ATP-binding</keyword>
<keyword id="KW-0963">Cytoplasm</keyword>
<keyword id="KW-0418">Kinase</keyword>
<keyword id="KW-0547">Nucleotide-binding</keyword>
<keyword id="KW-0641">Proline biosynthesis</keyword>
<keyword id="KW-1185">Reference proteome</keyword>
<keyword id="KW-0808">Transferase</keyword>
<evidence type="ECO:0000255" key="1">
    <source>
        <dbReference type="HAMAP-Rule" id="MF_00456"/>
    </source>
</evidence>
<reference key="1">
    <citation type="journal article" date="2008" name="PLoS Genet.">
        <title>Complete genome sequence of the complex carbohydrate-degrading marine bacterium, Saccharophagus degradans strain 2-40 T.</title>
        <authorList>
            <person name="Weiner R.M."/>
            <person name="Taylor L.E. II"/>
            <person name="Henrissat B."/>
            <person name="Hauser L."/>
            <person name="Land M."/>
            <person name="Coutinho P.M."/>
            <person name="Rancurel C."/>
            <person name="Saunders E.H."/>
            <person name="Longmire A.G."/>
            <person name="Zhang H."/>
            <person name="Bayer E.A."/>
            <person name="Gilbert H.J."/>
            <person name="Larimer F."/>
            <person name="Zhulin I.B."/>
            <person name="Ekborg N.A."/>
            <person name="Lamed R."/>
            <person name="Richardson P.M."/>
            <person name="Borovok I."/>
            <person name="Hutcheson S."/>
        </authorList>
    </citation>
    <scope>NUCLEOTIDE SEQUENCE [LARGE SCALE GENOMIC DNA]</scope>
    <source>
        <strain>2-40 / ATCC 43961 / DSM 17024</strain>
    </source>
</reference>
<name>PROB_SACD2</name>
<sequence length="373" mass="40627">MSKRQLVKQSRRWVIKIGSALLTNNGRGLDREEMAVWVKQMAALSKRGYEVVLVSSGAVAAGMTRLGWAERPKALHELQAAAAVGQSSLIQAYEQEFQKYSIKTAQILLDHDDLSNRQRYLNARSTLRTLTKLGVIPIVNENDTVVTDEIRFGDNDTLGALVANLIEADTLCILTDQKAMFDSDPRQNALAKMLIERSAFDPGLDAMAGDGGALGRGGMISKVRAARLAARSGANTIVVGGKVFDVIPRVASGEILGTLLYSESQPIAARKRWLAGNMQPRGRLTLDDGAVKVLREQGKSLLPVGVRAVEGYFTRGELVLCEDTAGREIARGLVNYSSDETNKIKGASSSRIDSLLGYKDYDELIHRDNLVLV</sequence>